<organism>
    <name type="scientific">Helicobacter pylori (strain ATCC 700392 / 26695)</name>
    <name type="common">Campylobacter pylori</name>
    <dbReference type="NCBI Taxonomy" id="85962"/>
    <lineage>
        <taxon>Bacteria</taxon>
        <taxon>Pseudomonadati</taxon>
        <taxon>Campylobacterota</taxon>
        <taxon>Epsilonproteobacteria</taxon>
        <taxon>Campylobacterales</taxon>
        <taxon>Helicobacteraceae</taxon>
        <taxon>Helicobacter</taxon>
    </lineage>
</organism>
<sequence>MPLFDLKSPYPPAGDQPQAIEALTKSLKNNNHYQTLVGVTGSGKTYTMANIIAQTNKPALIMSHNKTLCAQLYSEFKAFFPHNRVEYFISHFDYYQPESYIPRRDLFIEKDSSINDDLERLRLSATTSLLGYDDVIVIASVSANYGLGNPEEYLKVMEKIKVGEKRAYKSFLLKLVEMGYSRNEVVFDRGSFRATGECVDIFPAYNDAEFIRIEFFGDEIERIAVFDALEKNEIKRLDSVMLYAASQFAVGSERLNLAIKSIEDELALRLKFFKEQDKMLEYNRLKQRTEHDLEMISATGVCKGIENYARHFTGKAPNETPFCLFDYLGIFEREFLVIVDESHVSLPQFGGMYAGDMSRKSVLVEYGFRLPSALDNRPLKFDEFIHKNCQFLFVSATPNKLELELSKKNVAEQIIRPTGLLDPKFEVRDSDKQVQDLFDEIKLVVARGERVLITTLTKKMAEELCKYYAEWGLKARYMHSEIDAIERNHIIRSLRLKEFDILIGINLLREGLDLPEVSLVAIMDADKEGFLRSETSLIQTMGRAARNANGKVLLYAKKITQSMQKAFEITSYRRAKQEEFNKIHNITPKTVTRALEEELKLRDDEIRIAKALKKDKMPKSEREKIIKELDKKMRECTKNLDFEEAMRLRDEIAQLRTL</sequence>
<dbReference type="EMBL" id="U80807">
    <property type="protein sequence ID" value="AAC46270.1"/>
    <property type="molecule type" value="Genomic_DNA"/>
</dbReference>
<dbReference type="EMBL" id="AE000511">
    <property type="protein sequence ID" value="AAD08158.1"/>
    <property type="molecule type" value="Genomic_DNA"/>
</dbReference>
<dbReference type="PIR" id="B64659">
    <property type="entry name" value="B64659"/>
</dbReference>
<dbReference type="RefSeq" id="NP_207905.1">
    <property type="nucleotide sequence ID" value="NC_000915.1"/>
</dbReference>
<dbReference type="RefSeq" id="WP_001127890.1">
    <property type="nucleotide sequence ID" value="NC_018939.1"/>
</dbReference>
<dbReference type="SMR" id="P94846"/>
<dbReference type="DIP" id="DIP-3238N"/>
<dbReference type="FunCoup" id="P94846">
    <property type="interactions" value="127"/>
</dbReference>
<dbReference type="IntAct" id="P94846">
    <property type="interactions" value="18"/>
</dbReference>
<dbReference type="MINT" id="P94846"/>
<dbReference type="STRING" id="85962.HP_1114"/>
<dbReference type="PaxDb" id="85962-C694_05745"/>
<dbReference type="EnsemblBacteria" id="AAD08158">
    <property type="protein sequence ID" value="AAD08158"/>
    <property type="gene ID" value="HP_1114"/>
</dbReference>
<dbReference type="KEGG" id="heo:C694_05745"/>
<dbReference type="KEGG" id="hpy:HP_1114"/>
<dbReference type="PATRIC" id="fig|85962.47.peg.1195"/>
<dbReference type="eggNOG" id="COG0556">
    <property type="taxonomic scope" value="Bacteria"/>
</dbReference>
<dbReference type="InParanoid" id="P94846"/>
<dbReference type="OrthoDB" id="9806651at2"/>
<dbReference type="PhylomeDB" id="P94846"/>
<dbReference type="Proteomes" id="UP000000429">
    <property type="component" value="Chromosome"/>
</dbReference>
<dbReference type="GO" id="GO:0005737">
    <property type="term" value="C:cytoplasm"/>
    <property type="evidence" value="ECO:0007669"/>
    <property type="project" value="UniProtKB-SubCell"/>
</dbReference>
<dbReference type="GO" id="GO:0009380">
    <property type="term" value="C:excinuclease repair complex"/>
    <property type="evidence" value="ECO:0000318"/>
    <property type="project" value="GO_Central"/>
</dbReference>
<dbReference type="GO" id="GO:0005524">
    <property type="term" value="F:ATP binding"/>
    <property type="evidence" value="ECO:0007669"/>
    <property type="project" value="UniProtKB-UniRule"/>
</dbReference>
<dbReference type="GO" id="GO:0016887">
    <property type="term" value="F:ATP hydrolysis activity"/>
    <property type="evidence" value="ECO:0007669"/>
    <property type="project" value="InterPro"/>
</dbReference>
<dbReference type="GO" id="GO:0003677">
    <property type="term" value="F:DNA binding"/>
    <property type="evidence" value="ECO:0007669"/>
    <property type="project" value="UniProtKB-UniRule"/>
</dbReference>
<dbReference type="GO" id="GO:0009381">
    <property type="term" value="F:excinuclease ABC activity"/>
    <property type="evidence" value="ECO:0007669"/>
    <property type="project" value="UniProtKB-UniRule"/>
</dbReference>
<dbReference type="GO" id="GO:0000715">
    <property type="term" value="P:nucleotide-excision repair, DNA damage recognition"/>
    <property type="evidence" value="ECO:0000318"/>
    <property type="project" value="GO_Central"/>
</dbReference>
<dbReference type="GO" id="GO:0009432">
    <property type="term" value="P:SOS response"/>
    <property type="evidence" value="ECO:0007669"/>
    <property type="project" value="UniProtKB-UniRule"/>
</dbReference>
<dbReference type="CDD" id="cd17916">
    <property type="entry name" value="DEXHc_UvrB"/>
    <property type="match status" value="1"/>
</dbReference>
<dbReference type="CDD" id="cd18790">
    <property type="entry name" value="SF2_C_UvrB"/>
    <property type="match status" value="1"/>
</dbReference>
<dbReference type="Gene3D" id="3.40.50.300">
    <property type="entry name" value="P-loop containing nucleotide triphosphate hydrolases"/>
    <property type="match status" value="3"/>
</dbReference>
<dbReference type="Gene3D" id="4.10.860.10">
    <property type="entry name" value="UVR domain"/>
    <property type="match status" value="1"/>
</dbReference>
<dbReference type="HAMAP" id="MF_00204">
    <property type="entry name" value="UvrB"/>
    <property type="match status" value="1"/>
</dbReference>
<dbReference type="InterPro" id="IPR006935">
    <property type="entry name" value="Helicase/UvrB_N"/>
</dbReference>
<dbReference type="InterPro" id="IPR014001">
    <property type="entry name" value="Helicase_ATP-bd"/>
</dbReference>
<dbReference type="InterPro" id="IPR001650">
    <property type="entry name" value="Helicase_C-like"/>
</dbReference>
<dbReference type="InterPro" id="IPR027417">
    <property type="entry name" value="P-loop_NTPase"/>
</dbReference>
<dbReference type="InterPro" id="IPR001943">
    <property type="entry name" value="UVR_dom"/>
</dbReference>
<dbReference type="InterPro" id="IPR036876">
    <property type="entry name" value="UVR_dom_sf"/>
</dbReference>
<dbReference type="InterPro" id="IPR004807">
    <property type="entry name" value="UvrB"/>
</dbReference>
<dbReference type="InterPro" id="IPR041471">
    <property type="entry name" value="UvrB_inter"/>
</dbReference>
<dbReference type="InterPro" id="IPR024759">
    <property type="entry name" value="UvrB_YAD/RRR_dom"/>
</dbReference>
<dbReference type="NCBIfam" id="NF003673">
    <property type="entry name" value="PRK05298.1"/>
    <property type="match status" value="1"/>
</dbReference>
<dbReference type="NCBIfam" id="TIGR00631">
    <property type="entry name" value="uvrb"/>
    <property type="match status" value="1"/>
</dbReference>
<dbReference type="PANTHER" id="PTHR24029">
    <property type="entry name" value="UVRABC SYSTEM PROTEIN B"/>
    <property type="match status" value="1"/>
</dbReference>
<dbReference type="PANTHER" id="PTHR24029:SF0">
    <property type="entry name" value="UVRABC SYSTEM PROTEIN B"/>
    <property type="match status" value="1"/>
</dbReference>
<dbReference type="Pfam" id="PF00271">
    <property type="entry name" value="Helicase_C"/>
    <property type="match status" value="1"/>
</dbReference>
<dbReference type="Pfam" id="PF04851">
    <property type="entry name" value="ResIII"/>
    <property type="match status" value="1"/>
</dbReference>
<dbReference type="Pfam" id="PF02151">
    <property type="entry name" value="UVR"/>
    <property type="match status" value="1"/>
</dbReference>
<dbReference type="Pfam" id="PF12344">
    <property type="entry name" value="UvrB"/>
    <property type="match status" value="1"/>
</dbReference>
<dbReference type="Pfam" id="PF17757">
    <property type="entry name" value="UvrB_inter"/>
    <property type="match status" value="1"/>
</dbReference>
<dbReference type="SMART" id="SM00487">
    <property type="entry name" value="DEXDc"/>
    <property type="match status" value="1"/>
</dbReference>
<dbReference type="SMART" id="SM00490">
    <property type="entry name" value="HELICc"/>
    <property type="match status" value="1"/>
</dbReference>
<dbReference type="SUPFAM" id="SSF46600">
    <property type="entry name" value="C-terminal UvrC-binding domain of UvrB"/>
    <property type="match status" value="1"/>
</dbReference>
<dbReference type="SUPFAM" id="SSF52540">
    <property type="entry name" value="P-loop containing nucleoside triphosphate hydrolases"/>
    <property type="match status" value="2"/>
</dbReference>
<dbReference type="PROSITE" id="PS51192">
    <property type="entry name" value="HELICASE_ATP_BIND_1"/>
    <property type="match status" value="2"/>
</dbReference>
<dbReference type="PROSITE" id="PS51194">
    <property type="entry name" value="HELICASE_CTER"/>
    <property type="match status" value="1"/>
</dbReference>
<dbReference type="PROSITE" id="PS50151">
    <property type="entry name" value="UVR"/>
    <property type="match status" value="1"/>
</dbReference>
<keyword id="KW-0067">ATP-binding</keyword>
<keyword id="KW-0963">Cytoplasm</keyword>
<keyword id="KW-0227">DNA damage</keyword>
<keyword id="KW-0228">DNA excision</keyword>
<keyword id="KW-0234">DNA repair</keyword>
<keyword id="KW-0267">Excision nuclease</keyword>
<keyword id="KW-0547">Nucleotide-binding</keyword>
<keyword id="KW-1185">Reference proteome</keyword>
<keyword id="KW-0742">SOS response</keyword>
<accession>P94846</accession>
<reference key="1">
    <citation type="journal article" date="1998" name="Gene">
        <title>Molecular characterization of the Helicobacter pylori uvr B gene.</title>
        <authorList>
            <person name="Thompson S.A."/>
            <person name="Latch R.L."/>
            <person name="Blaser J.M."/>
        </authorList>
    </citation>
    <scope>NUCLEOTIDE SEQUENCE [GENOMIC DNA]</scope>
    <source>
        <strain>ATCC 53726 / 84-183</strain>
    </source>
</reference>
<reference key="2">
    <citation type="journal article" date="1997" name="Nature">
        <title>The complete genome sequence of the gastric pathogen Helicobacter pylori.</title>
        <authorList>
            <person name="Tomb J.-F."/>
            <person name="White O."/>
            <person name="Kerlavage A.R."/>
            <person name="Clayton R.A."/>
            <person name="Sutton G.G."/>
            <person name="Fleischmann R.D."/>
            <person name="Ketchum K.A."/>
            <person name="Klenk H.-P."/>
            <person name="Gill S.R."/>
            <person name="Dougherty B.A."/>
            <person name="Nelson K.E."/>
            <person name="Quackenbush J."/>
            <person name="Zhou L."/>
            <person name="Kirkness E.F."/>
            <person name="Peterson S.N."/>
            <person name="Loftus B.J."/>
            <person name="Richardson D.L."/>
            <person name="Dodson R.J."/>
            <person name="Khalak H.G."/>
            <person name="Glodek A."/>
            <person name="McKenney K."/>
            <person name="FitzGerald L.M."/>
            <person name="Lee N."/>
            <person name="Adams M.D."/>
            <person name="Hickey E.K."/>
            <person name="Berg D.E."/>
            <person name="Gocayne J.D."/>
            <person name="Utterback T.R."/>
            <person name="Peterson J.D."/>
            <person name="Kelley J.M."/>
            <person name="Cotton M.D."/>
            <person name="Weidman J.F."/>
            <person name="Fujii C."/>
            <person name="Bowman C."/>
            <person name="Watthey L."/>
            <person name="Wallin E."/>
            <person name="Hayes W.S."/>
            <person name="Borodovsky M."/>
            <person name="Karp P.D."/>
            <person name="Smith H.O."/>
            <person name="Fraser C.M."/>
            <person name="Venter J.C."/>
        </authorList>
    </citation>
    <scope>NUCLEOTIDE SEQUENCE [LARGE SCALE GENOMIC DNA]</scope>
    <source>
        <strain>ATCC 700392 / 26695</strain>
    </source>
</reference>
<protein>
    <recommendedName>
        <fullName evidence="1">UvrABC system protein B</fullName>
        <shortName evidence="1">Protein UvrB</shortName>
    </recommendedName>
    <alternativeName>
        <fullName evidence="1">Excinuclease ABC subunit B</fullName>
    </alternativeName>
</protein>
<comment type="function">
    <text evidence="1">The UvrABC repair system catalyzes the recognition and processing of DNA lesions. A damage recognition complex composed of 2 UvrA and 2 UvrB subunits scans DNA for abnormalities. Upon binding of the UvrA(2)B(2) complex to a putative damaged site, the DNA wraps around one UvrB monomer. DNA wrap is dependent on ATP binding by UvrB and probably causes local melting of the DNA helix, facilitating insertion of UvrB beta-hairpin between the DNA strands. Then UvrB probes one DNA strand for the presence of a lesion. If a lesion is found the UvrA subunits dissociate and the UvrB-DNA preincision complex is formed. This complex is subsequently bound by UvrC and the second UvrB is released. If no lesion is found, the DNA wraps around the other UvrB subunit that will check the other stand for damage.</text>
</comment>
<comment type="subunit">
    <text evidence="1">Forms a heterotetramer with UvrA during the search for lesions. Interacts with UvrC in an incision complex.</text>
</comment>
<comment type="subcellular location">
    <subcellularLocation>
        <location evidence="1">Cytoplasm</location>
    </subcellularLocation>
</comment>
<comment type="domain">
    <text evidence="1">The beta-hairpin motif is involved in DNA binding.</text>
</comment>
<comment type="similarity">
    <text evidence="1">Belongs to the UvrB family.</text>
</comment>
<gene>
    <name evidence="1" type="primary">uvrB</name>
    <name type="ordered locus">HP_1114</name>
</gene>
<proteinExistence type="inferred from homology"/>
<evidence type="ECO:0000255" key="1">
    <source>
        <dbReference type="HAMAP-Rule" id="MF_00204"/>
    </source>
</evidence>
<name>UVRB_HELPY</name>
<feature type="chain" id="PRO_0000138396" description="UvrABC system protein B">
    <location>
        <begin position="1"/>
        <end position="658"/>
    </location>
</feature>
<feature type="domain" description="Helicase ATP-binding" evidence="1">
    <location>
        <begin position="25"/>
        <end position="414"/>
    </location>
</feature>
<feature type="domain" description="Helicase C-terminal" evidence="1">
    <location>
        <begin position="433"/>
        <end position="607"/>
    </location>
</feature>
<feature type="domain" description="UVR" evidence="1">
    <location>
        <begin position="623"/>
        <end position="658"/>
    </location>
</feature>
<feature type="short sequence motif" description="Beta-hairpin">
    <location>
        <begin position="91"/>
        <end position="114"/>
    </location>
</feature>
<feature type="binding site" evidence="1">
    <location>
        <begin position="38"/>
        <end position="45"/>
    </location>
    <ligand>
        <name>ATP</name>
        <dbReference type="ChEBI" id="CHEBI:30616"/>
    </ligand>
</feature>
<feature type="sequence variant" description="In strain: 84-183.">
    <original>A</original>
    <variation>T</variation>
    <location>
        <position position="59"/>
    </location>
</feature>
<feature type="sequence variant" description="In strain: 84-183.">
    <original>K</original>
    <variation>R</variation>
    <location>
        <position position="231"/>
    </location>
</feature>
<feature type="sequence variant" description="In strain: 84-183.">
    <original>I</original>
    <variation>V</variation>
    <location>
        <position position="259"/>
    </location>
</feature>
<feature type="sequence variant" description="In strain: 84-183.">
    <original>N</original>
    <variation>T</variation>
    <location>
        <position position="376"/>
    </location>
</feature>
<feature type="sequence variant" description="In strain: 84-183.">
    <original>K</original>
    <variation>Q</variation>
    <location>
        <position position="407"/>
    </location>
</feature>
<feature type="sequence variant" description="In strain: 84-183.">
    <original>L</original>
    <variation>S</variation>
    <location>
        <position position="443"/>
    </location>
</feature>
<feature type="sequence variant" description="In strain: 84-183.">
    <original>A</original>
    <variation>V</variation>
    <location>
        <position position="475"/>
    </location>
</feature>
<feature type="sequence variant" description="In strain: 84-183.">
    <original>I</original>
    <variation>V</variation>
    <location>
        <position position="501"/>
    </location>
</feature>
<feature type="sequence variant" description="In strain: 84-183.">
    <original>R</original>
    <variation>K</variation>
    <location>
        <position position="607"/>
    </location>
</feature>
<feature type="sequence variant" description="In strain: 84-183.">
    <original>CT</original>
    <variation>HA</variation>
    <location>
        <begin position="636"/>
        <end position="637"/>
    </location>
</feature>